<proteinExistence type="evidence at protein level"/>
<organism>
    <name type="scientific">Arabidopsis thaliana</name>
    <name type="common">Mouse-ear cress</name>
    <dbReference type="NCBI Taxonomy" id="3702"/>
    <lineage>
        <taxon>Eukaryota</taxon>
        <taxon>Viridiplantae</taxon>
        <taxon>Streptophyta</taxon>
        <taxon>Embryophyta</taxon>
        <taxon>Tracheophyta</taxon>
        <taxon>Spermatophyta</taxon>
        <taxon>Magnoliopsida</taxon>
        <taxon>eudicotyledons</taxon>
        <taxon>Gunneridae</taxon>
        <taxon>Pentapetalae</taxon>
        <taxon>rosids</taxon>
        <taxon>malvids</taxon>
        <taxon>Brassicales</taxon>
        <taxon>Brassicaceae</taxon>
        <taxon>Camelineae</taxon>
        <taxon>Arabidopsis</taxon>
    </lineage>
</organism>
<feature type="initiator methionine" description="Removed" evidence="8">
    <location>
        <position position="1"/>
    </location>
</feature>
<feature type="chain" id="PRO_0000440166" description="Vacuolar protein sorting-associated protein 51 homolog">
    <location>
        <begin position="2"/>
        <end position="780"/>
    </location>
</feature>
<feature type="region of interest" description="Disordered" evidence="2">
    <location>
        <begin position="270"/>
        <end position="292"/>
    </location>
</feature>
<feature type="region of interest" description="Disordered" evidence="2">
    <location>
        <begin position="615"/>
        <end position="651"/>
    </location>
</feature>
<feature type="compositionally biased region" description="Acidic residues" evidence="2">
    <location>
        <begin position="273"/>
        <end position="284"/>
    </location>
</feature>
<feature type="compositionally biased region" description="Low complexity" evidence="2">
    <location>
        <begin position="626"/>
        <end position="639"/>
    </location>
</feature>
<feature type="modified residue" description="N-acetylalanine" evidence="8">
    <location>
        <position position="2"/>
    </location>
</feature>
<accession>Q0WQ75</accession>
<accession>O04247</accession>
<dbReference type="EMBL" id="AF001308">
    <property type="protein sequence ID" value="AAC78695.1"/>
    <property type="status" value="ALT_SEQ"/>
    <property type="molecule type" value="Genomic_DNA"/>
</dbReference>
<dbReference type="EMBL" id="AL161493">
    <property type="protein sequence ID" value="CAB80696.1"/>
    <property type="status" value="ALT_SEQ"/>
    <property type="molecule type" value="Genomic_DNA"/>
</dbReference>
<dbReference type="EMBL" id="CP002687">
    <property type="protein sequence ID" value="AEE82113.1"/>
    <property type="molecule type" value="Genomic_DNA"/>
</dbReference>
<dbReference type="EMBL" id="AK228828">
    <property type="protein sequence ID" value="BAF00724.1"/>
    <property type="molecule type" value="mRNA"/>
</dbReference>
<dbReference type="PIR" id="T01504">
    <property type="entry name" value="T01504"/>
</dbReference>
<dbReference type="RefSeq" id="NP_192112.2">
    <property type="nucleotide sequence ID" value="NM_116434.4"/>
</dbReference>
<dbReference type="SMR" id="Q0WQ75"/>
<dbReference type="FunCoup" id="Q0WQ75">
    <property type="interactions" value="3939"/>
</dbReference>
<dbReference type="STRING" id="3702.Q0WQ75"/>
<dbReference type="iPTMnet" id="Q0WQ75"/>
<dbReference type="PaxDb" id="3702-AT4G02030.2"/>
<dbReference type="EnsemblPlants" id="AT4G02030.1">
    <property type="protein sequence ID" value="AT4G02030.1"/>
    <property type="gene ID" value="AT4G02030"/>
</dbReference>
<dbReference type="GeneID" id="828155"/>
<dbReference type="Gramene" id="AT4G02030.1">
    <property type="protein sequence ID" value="AT4G02030.1"/>
    <property type="gene ID" value="AT4G02030"/>
</dbReference>
<dbReference type="KEGG" id="ath:AT4G02030"/>
<dbReference type="Araport" id="AT4G02030"/>
<dbReference type="TAIR" id="AT4G02030">
    <property type="gene designation" value="UNH"/>
</dbReference>
<dbReference type="eggNOG" id="KOG2346">
    <property type="taxonomic scope" value="Eukaryota"/>
</dbReference>
<dbReference type="InParanoid" id="Q0WQ75"/>
<dbReference type="OMA" id="DIICERG"/>
<dbReference type="PhylomeDB" id="Q0WQ75"/>
<dbReference type="PRO" id="PR:Q0WQ75"/>
<dbReference type="Proteomes" id="UP000006548">
    <property type="component" value="Chromosome 4"/>
</dbReference>
<dbReference type="ExpressionAtlas" id="Q0WQ75">
    <property type="expression patterns" value="baseline and differential"/>
</dbReference>
<dbReference type="GO" id="GO:0005829">
    <property type="term" value="C:cytosol"/>
    <property type="evidence" value="ECO:0007669"/>
    <property type="project" value="GOC"/>
</dbReference>
<dbReference type="GO" id="GO:1990745">
    <property type="term" value="C:EARP complex"/>
    <property type="evidence" value="ECO:0000250"/>
    <property type="project" value="UniProtKB"/>
</dbReference>
<dbReference type="GO" id="GO:0000938">
    <property type="term" value="C:GARP complex"/>
    <property type="evidence" value="ECO:0000314"/>
    <property type="project" value="UniProtKB"/>
</dbReference>
<dbReference type="GO" id="GO:0055037">
    <property type="term" value="C:recycling endosome"/>
    <property type="evidence" value="ECO:0000250"/>
    <property type="project" value="UniProtKB"/>
</dbReference>
<dbReference type="GO" id="GO:0006914">
    <property type="term" value="P:autophagy"/>
    <property type="evidence" value="ECO:0000250"/>
    <property type="project" value="UniProtKB"/>
</dbReference>
<dbReference type="GO" id="GO:0032456">
    <property type="term" value="P:endocytic recycling"/>
    <property type="evidence" value="ECO:0000250"/>
    <property type="project" value="UniProtKB"/>
</dbReference>
<dbReference type="GO" id="GO:0010305">
    <property type="term" value="P:leaf vascular tissue pattern formation"/>
    <property type="evidence" value="ECO:0000315"/>
    <property type="project" value="UniProtKB"/>
</dbReference>
<dbReference type="GO" id="GO:0006869">
    <property type="term" value="P:lipid transport"/>
    <property type="evidence" value="ECO:0007669"/>
    <property type="project" value="UniProtKB-KW"/>
</dbReference>
<dbReference type="GO" id="GO:0015031">
    <property type="term" value="P:protein transport"/>
    <property type="evidence" value="ECO:0007669"/>
    <property type="project" value="UniProtKB-KW"/>
</dbReference>
<dbReference type="GO" id="GO:0042147">
    <property type="term" value="P:retrograde transport, endosome to Golgi"/>
    <property type="evidence" value="ECO:0000250"/>
    <property type="project" value="UniProtKB"/>
</dbReference>
<dbReference type="GO" id="GO:0007034">
    <property type="term" value="P:vacuolar transport"/>
    <property type="evidence" value="ECO:0000315"/>
    <property type="project" value="UniProtKB"/>
</dbReference>
<dbReference type="GO" id="GO:0016192">
    <property type="term" value="P:vesicle-mediated transport"/>
    <property type="evidence" value="ECO:0000315"/>
    <property type="project" value="UniProtKB"/>
</dbReference>
<dbReference type="InterPro" id="IPR039481">
    <property type="entry name" value="EXOC2/Sec5_N_dom"/>
</dbReference>
<dbReference type="InterPro" id="IPR014812">
    <property type="entry name" value="Vps51"/>
</dbReference>
<dbReference type="PANTHER" id="PTHR15954">
    <property type="entry name" value="VACUOLAR PROTEIN SORTING-ASSOCIATED PROTEIN 51 HOMOLOG"/>
    <property type="match status" value="1"/>
</dbReference>
<dbReference type="PANTHER" id="PTHR15954:SF4">
    <property type="entry name" value="VACUOLAR PROTEIN SORTING-ASSOCIATED PROTEIN 51 HOMOLOG"/>
    <property type="match status" value="1"/>
</dbReference>
<dbReference type="Pfam" id="PF15469">
    <property type="entry name" value="Sec5"/>
    <property type="match status" value="1"/>
</dbReference>
<dbReference type="Pfam" id="PF08700">
    <property type="entry name" value="VPS51_Exo84_N"/>
    <property type="match status" value="1"/>
</dbReference>
<reference key="1">
    <citation type="journal article" date="1999" name="Nature">
        <title>Sequence and analysis of chromosome 4 of the plant Arabidopsis thaliana.</title>
        <authorList>
            <person name="Mayer K.F.X."/>
            <person name="Schueller C."/>
            <person name="Wambutt R."/>
            <person name="Murphy G."/>
            <person name="Volckaert G."/>
            <person name="Pohl T."/>
            <person name="Duesterhoeft A."/>
            <person name="Stiekema W."/>
            <person name="Entian K.-D."/>
            <person name="Terryn N."/>
            <person name="Harris B."/>
            <person name="Ansorge W."/>
            <person name="Brandt P."/>
            <person name="Grivell L.A."/>
            <person name="Rieger M."/>
            <person name="Weichselgartner M."/>
            <person name="de Simone V."/>
            <person name="Obermaier B."/>
            <person name="Mache R."/>
            <person name="Mueller M."/>
            <person name="Kreis M."/>
            <person name="Delseny M."/>
            <person name="Puigdomenech P."/>
            <person name="Watson M."/>
            <person name="Schmidtheini T."/>
            <person name="Reichert B."/>
            <person name="Portetelle D."/>
            <person name="Perez-Alonso M."/>
            <person name="Boutry M."/>
            <person name="Bancroft I."/>
            <person name="Vos P."/>
            <person name="Hoheisel J."/>
            <person name="Zimmermann W."/>
            <person name="Wedler H."/>
            <person name="Ridley P."/>
            <person name="Langham S.-A."/>
            <person name="McCullagh B."/>
            <person name="Bilham L."/>
            <person name="Robben J."/>
            <person name="van der Schueren J."/>
            <person name="Grymonprez B."/>
            <person name="Chuang Y.-J."/>
            <person name="Vandenbussche F."/>
            <person name="Braeken M."/>
            <person name="Weltjens I."/>
            <person name="Voet M."/>
            <person name="Bastiaens I."/>
            <person name="Aert R."/>
            <person name="Defoor E."/>
            <person name="Weitzenegger T."/>
            <person name="Bothe G."/>
            <person name="Ramsperger U."/>
            <person name="Hilbert H."/>
            <person name="Braun M."/>
            <person name="Holzer E."/>
            <person name="Brandt A."/>
            <person name="Peters S."/>
            <person name="van Staveren M."/>
            <person name="Dirkse W."/>
            <person name="Mooijman P."/>
            <person name="Klein Lankhorst R."/>
            <person name="Rose M."/>
            <person name="Hauf J."/>
            <person name="Koetter P."/>
            <person name="Berneiser S."/>
            <person name="Hempel S."/>
            <person name="Feldpausch M."/>
            <person name="Lamberth S."/>
            <person name="Van den Daele H."/>
            <person name="De Keyser A."/>
            <person name="Buysshaert C."/>
            <person name="Gielen J."/>
            <person name="Villarroel R."/>
            <person name="De Clercq R."/>
            <person name="van Montagu M."/>
            <person name="Rogers J."/>
            <person name="Cronin A."/>
            <person name="Quail M.A."/>
            <person name="Bray-Allen S."/>
            <person name="Clark L."/>
            <person name="Doggett J."/>
            <person name="Hall S."/>
            <person name="Kay M."/>
            <person name="Lennard N."/>
            <person name="McLay K."/>
            <person name="Mayes R."/>
            <person name="Pettett A."/>
            <person name="Rajandream M.A."/>
            <person name="Lyne M."/>
            <person name="Benes V."/>
            <person name="Rechmann S."/>
            <person name="Borkova D."/>
            <person name="Bloecker H."/>
            <person name="Scharfe M."/>
            <person name="Grimm M."/>
            <person name="Loehnert T.-H."/>
            <person name="Dose S."/>
            <person name="de Haan M."/>
            <person name="Maarse A.C."/>
            <person name="Schaefer M."/>
            <person name="Mueller-Auer S."/>
            <person name="Gabel C."/>
            <person name="Fuchs M."/>
            <person name="Fartmann B."/>
            <person name="Granderath K."/>
            <person name="Dauner D."/>
            <person name="Herzl A."/>
            <person name="Neumann S."/>
            <person name="Argiriou A."/>
            <person name="Vitale D."/>
            <person name="Liguori R."/>
            <person name="Piravandi E."/>
            <person name="Massenet O."/>
            <person name="Quigley F."/>
            <person name="Clabauld G."/>
            <person name="Muendlein A."/>
            <person name="Felber R."/>
            <person name="Schnabl S."/>
            <person name="Hiller R."/>
            <person name="Schmidt W."/>
            <person name="Lecharny A."/>
            <person name="Aubourg S."/>
            <person name="Chefdor F."/>
            <person name="Cooke R."/>
            <person name="Berger C."/>
            <person name="Monfort A."/>
            <person name="Casacuberta E."/>
            <person name="Gibbons T."/>
            <person name="Weber N."/>
            <person name="Vandenbol M."/>
            <person name="Bargues M."/>
            <person name="Terol J."/>
            <person name="Torres A."/>
            <person name="Perez-Perez A."/>
            <person name="Purnelle B."/>
            <person name="Bent E."/>
            <person name="Johnson S."/>
            <person name="Tacon D."/>
            <person name="Jesse T."/>
            <person name="Heijnen L."/>
            <person name="Schwarz S."/>
            <person name="Scholler P."/>
            <person name="Heber S."/>
            <person name="Francs P."/>
            <person name="Bielke C."/>
            <person name="Frishman D."/>
            <person name="Haase D."/>
            <person name="Lemcke K."/>
            <person name="Mewes H.-W."/>
            <person name="Stocker S."/>
            <person name="Zaccaria P."/>
            <person name="Bevan M."/>
            <person name="Wilson R.K."/>
            <person name="de la Bastide M."/>
            <person name="Habermann K."/>
            <person name="Parnell L."/>
            <person name="Dedhia N."/>
            <person name="Gnoj L."/>
            <person name="Schutz K."/>
            <person name="Huang E."/>
            <person name="Spiegel L."/>
            <person name="Sekhon M."/>
            <person name="Murray J."/>
            <person name="Sheet P."/>
            <person name="Cordes M."/>
            <person name="Abu-Threideh J."/>
            <person name="Stoneking T."/>
            <person name="Kalicki J."/>
            <person name="Graves T."/>
            <person name="Harmon G."/>
            <person name="Edwards J."/>
            <person name="Latreille P."/>
            <person name="Courtney L."/>
            <person name="Cloud J."/>
            <person name="Abbott A."/>
            <person name="Scott K."/>
            <person name="Johnson D."/>
            <person name="Minx P."/>
            <person name="Bentley D."/>
            <person name="Fulton B."/>
            <person name="Miller N."/>
            <person name="Greco T."/>
            <person name="Kemp K."/>
            <person name="Kramer J."/>
            <person name="Fulton L."/>
            <person name="Mardis E."/>
            <person name="Dante M."/>
            <person name="Pepin K."/>
            <person name="Hillier L.W."/>
            <person name="Nelson J."/>
            <person name="Spieth J."/>
            <person name="Ryan E."/>
            <person name="Andrews S."/>
            <person name="Geisel C."/>
            <person name="Layman D."/>
            <person name="Du H."/>
            <person name="Ali J."/>
            <person name="Berghoff A."/>
            <person name="Jones K."/>
            <person name="Drone K."/>
            <person name="Cotton M."/>
            <person name="Joshu C."/>
            <person name="Antonoiu B."/>
            <person name="Zidanic M."/>
            <person name="Strong C."/>
            <person name="Sun H."/>
            <person name="Lamar B."/>
            <person name="Yordan C."/>
            <person name="Ma P."/>
            <person name="Zhong J."/>
            <person name="Preston R."/>
            <person name="Vil D."/>
            <person name="Shekher M."/>
            <person name="Matero A."/>
            <person name="Shah R."/>
            <person name="Swaby I.K."/>
            <person name="O'Shaughnessy A."/>
            <person name="Rodriguez M."/>
            <person name="Hoffman J."/>
            <person name="Till S."/>
            <person name="Granat S."/>
            <person name="Shohdy N."/>
            <person name="Hasegawa A."/>
            <person name="Hameed A."/>
            <person name="Lodhi M."/>
            <person name="Johnson A."/>
            <person name="Chen E."/>
            <person name="Marra M.A."/>
            <person name="Martienssen R."/>
            <person name="McCombie W.R."/>
        </authorList>
    </citation>
    <scope>NUCLEOTIDE SEQUENCE [LARGE SCALE GENOMIC DNA]</scope>
    <source>
        <strain>cv. Columbia</strain>
    </source>
</reference>
<reference key="2">
    <citation type="journal article" date="2017" name="Plant J.">
        <title>Araport11: a complete reannotation of the Arabidopsis thaliana reference genome.</title>
        <authorList>
            <person name="Cheng C.Y."/>
            <person name="Krishnakumar V."/>
            <person name="Chan A.P."/>
            <person name="Thibaud-Nissen F."/>
            <person name="Schobel S."/>
            <person name="Town C.D."/>
        </authorList>
    </citation>
    <scope>GENOME REANNOTATION</scope>
    <source>
        <strain>cv. Columbia</strain>
    </source>
</reference>
<reference key="3">
    <citation type="submission" date="2006-07" db="EMBL/GenBank/DDBJ databases">
        <title>Large-scale analysis of RIKEN Arabidopsis full-length (RAFL) cDNAs.</title>
        <authorList>
            <person name="Totoki Y."/>
            <person name="Seki M."/>
            <person name="Ishida J."/>
            <person name="Nakajima M."/>
            <person name="Enju A."/>
            <person name="Kamiya A."/>
            <person name="Narusaka M."/>
            <person name="Shin-i T."/>
            <person name="Nakagawa M."/>
            <person name="Sakamoto N."/>
            <person name="Oishi K."/>
            <person name="Kohara Y."/>
            <person name="Kobayashi M."/>
            <person name="Toyoda A."/>
            <person name="Sakaki Y."/>
            <person name="Sakurai T."/>
            <person name="Iida K."/>
            <person name="Akiyama K."/>
            <person name="Satou M."/>
            <person name="Toyoda T."/>
            <person name="Konagaya A."/>
            <person name="Carninci P."/>
            <person name="Kawai J."/>
            <person name="Hayashizaki Y."/>
            <person name="Shinozaki K."/>
        </authorList>
    </citation>
    <scope>NUCLEOTIDE SEQUENCE [LARGE SCALE MRNA]</scope>
    <source>
        <strain>cv. Columbia</strain>
    </source>
</reference>
<reference key="4">
    <citation type="journal article" date="2012" name="Mol. Cell. Proteomics">
        <title>Comparative large-scale characterisation of plant vs. mammal proteins reveals similar and idiosyncratic N-alpha acetylation features.</title>
        <authorList>
            <person name="Bienvenut W.V."/>
            <person name="Sumpton D."/>
            <person name="Martinez A."/>
            <person name="Lilla S."/>
            <person name="Espagne C."/>
            <person name="Meinnel T."/>
            <person name="Giglione C."/>
        </authorList>
    </citation>
    <scope>ACETYLATION [LARGE SCALE ANALYSIS] AT ALA-2</scope>
    <scope>CLEAVAGE OF INITIATOR METHIONINE [LARGE SCALE ANALYSIS]</scope>
    <scope>IDENTIFICATION BY MASS SPECTROMETRY [LARGE SCALE ANALYSIS]</scope>
</reference>
<reference key="5">
    <citation type="journal article" date="2014" name="Development">
        <title>Arabidopsis UNHINGED encodes a VPS51 homolog and reveals a role for the GARP complex in leaf shape and vein patterning.</title>
        <authorList>
            <person name="Pahari S."/>
            <person name="Cormark R.D."/>
            <person name="Blackshaw M.T."/>
            <person name="Liu C."/>
            <person name="Erickson J.L."/>
            <person name="Schultz E.A."/>
        </authorList>
    </citation>
    <scope>FUNCTION</scope>
    <scope>DISRUPTION PHENOTYPE</scope>
    <scope>INTERACTION WITH VPS52</scope>
    <scope>SUBCELLULAR LOCATION</scope>
    <scope>TISSUE SPECIFICITY</scope>
    <scope>DEVELOPMENTAL STAGE</scope>
    <source>
        <strain>cv. Columbia</strain>
    </source>
</reference>
<gene>
    <name evidence="4" type="primary">VPS51</name>
    <name evidence="4" type="synonym">UNH</name>
    <name evidence="6" type="ordered locus">At4g02030</name>
    <name evidence="7" type="ORF">T10M13.4</name>
</gene>
<protein>
    <recommendedName>
        <fullName evidence="4">Vacuolar protein sorting-associated protein 51 homolog</fullName>
    </recommendedName>
    <alternativeName>
        <fullName evidence="4">Protein UNHINGED</fullName>
    </alternativeName>
</protein>
<name>VPS51_ARATH</name>
<keyword id="KW-0007">Acetylation</keyword>
<keyword id="KW-0967">Endosome</keyword>
<keyword id="KW-0333">Golgi apparatus</keyword>
<keyword id="KW-0445">Lipid transport</keyword>
<keyword id="KW-0653">Protein transport</keyword>
<keyword id="KW-1185">Reference proteome</keyword>
<keyword id="KW-0813">Transport</keyword>
<sequence>MATEAAPMDEKAKRMRDLLSSFYAPDPSISTSGSSINASFDNINSTSFDADQYMDLMIKKSNLEVLLQRHVQMAAEIKNLDTDLQMLVYENYNKFISATDTIKRMKSNIFGMEGNMDQLLQKIMSVQSKSDGVNTSLFEKREHIEKLHRTRNLLRKVQFIYDLPARLQKCIKSEAYGDAVRFYTGAMPILKVYGDTSFQDCRRASEEAIEIIIKNLQTKLFSDSESIQARAEAAVLLKQLDVPVDSLKAKLLEKLEQSLDGLQIKPEEASTLVEDDDSSNDTESNDQHPAKIHEDAVRGFSEAIRAYREIFPDSEERLFKLARALTAMHFEYMELYIKKRVSAADFLGIFRIVWEDVVLMDEVLPEAALSDLSAEAAQVTLKQFVARMFSHLQQDISDTLLKFDINQKEAVEGELLKVVLEASQKAVLQGTTNIFQDFRQLLDEKTGIFIKMKDLISGWIQKGSQDFFRSLEAQFLVLSGKTSSSNDIEGKSSDKIHAGLILVLAQLSVFIEQKVIPRVTEEIAASFSGGNSQAFENGPAFIPGELCRVFHAASEKLLQHYIDTRTQKVSVLLRKRFKTPNWVKHKEPREVHMYVDMFLHELEEVGKEVKQVLPQGTFRKHKRTDSNGSNTTTSSRSNTLHNDKMARSNSQRARSQLFETHLAKLFKQKVEIFTKVEFTQESVVTTTVKLCLKSLQEYVRLQTFNRSGFQQIQLDIQFLKAPLKEAVEDEAAIDFLLDEVIVAASERCLDVIPLEPPILDKLIQAKLAKSKEHNNNTVSS</sequence>
<comment type="function">
    <text evidence="1 3">Acts as a component of the GARP complex that is involved in retrograde transport from early and late endosomes to the trans-Golgi network (TGN). The GARP complex is required for the maintenance of protein retrieval from endosomes to the TGN, acid hydrolase sorting, lysosome function, endosomal cholesterol traffic and autophagy. VPS51 participates in retrograde transport of acid hydrolase receptors, likely by promoting tethering and SNARE-dependent fusion of endosome-derived carriers to the TGN. Acts as a component of the EARP complex that is involved in endocytic recycling. The EARP complex associates with Rab4-positive endosomes and promotes recycling of internalized transferrin receptor (TFRC) to the plasma membrane (By similarity). Required for vacuolar targeting and cellular trafficking. Involved in the regulation of vascular tissue patterning, probably by regulating PIN1 expression pattern, thus modulating auxin flux. Important to prevent PIN1 accumulation within margin cells, possibly by targeting PIN1 to the lytic vacuole. Regulates PIN1 and ATHB8 expression pattern in secondary veins (PubMed:24757006).</text>
</comment>
<comment type="subunit">
    <text evidence="1 3">Component of the Golgi-associated retrograde protein (GARP) complex, composed by VPS51, VPS52, VPS53 and VPS54. Component of the endosome-associated retrograde protein (EARP) complex, composed of VPS51, VPS52, VPS53 and VPS50 (By similarity). Interacts with VPS52 (PubMed:24757006).</text>
</comment>
<comment type="subcellular location">
    <subcellularLocation>
        <location evidence="3">Golgi apparatus</location>
        <location evidence="3">trans-Golgi network</location>
    </subcellularLocation>
    <subcellularLocation>
        <location evidence="1">Recycling endosome</location>
    </subcellularLocation>
    <subcellularLocation>
        <location evidence="3">Prevacuolar compartment</location>
    </subcellularLocation>
    <text evidence="1">Localizes to the trans-Golgi network as part of the GARP complex, while it localizes to recycling endosomes as part of the EARP complex.</text>
</comment>
<comment type="tissue specificity">
    <text evidence="3">Expressed in primary and lateral roots, shoots of seedlings and flowers.</text>
</comment>
<comment type="developmental stage">
    <text evidence="3">In leaves, first observed at low levels in a diffuse pattern 3.5 days after germination (DAG), spreads throughout much of the lamina by 4 DAG and becomes increasingly restricted to presumptive veins from 5 to 8 DAG. Confined in epidermal cells of the proximal margins in mature leaves.</text>
</comment>
<comment type="disruption phenotype">
    <text evidence="3">Leaf vascular tissue patterning defects: simpler leaf venation with distal non-meeting of the secondary veins and fewer higher order veins, a narrower leaf with prominent serrations, and reduced root and shoot growth. Normal early endocytic events, but disrupted cellular trafficking. Reduced vacuolar targeting resulting in expanded expression of PIN1 in leaf margins and altered expression pattern of PIN1 and ATHB8 in secondary veins.</text>
</comment>
<comment type="similarity">
    <text evidence="5">Belongs to the VPS51 family.</text>
</comment>
<comment type="sequence caution" evidence="5">
    <conflict type="erroneous gene model prediction">
        <sequence resource="EMBL-CDS" id="AAC78695"/>
    </conflict>
</comment>
<comment type="sequence caution" evidence="5">
    <conflict type="erroneous gene model prediction">
        <sequence resource="EMBL-CDS" id="CAB80696"/>
    </conflict>
</comment>
<evidence type="ECO:0000250" key="1">
    <source>
        <dbReference type="UniProtKB" id="Q9UID3"/>
    </source>
</evidence>
<evidence type="ECO:0000256" key="2">
    <source>
        <dbReference type="SAM" id="MobiDB-lite"/>
    </source>
</evidence>
<evidence type="ECO:0000269" key="3">
    <source>
    </source>
</evidence>
<evidence type="ECO:0000303" key="4">
    <source>
    </source>
</evidence>
<evidence type="ECO:0000305" key="5"/>
<evidence type="ECO:0000312" key="6">
    <source>
        <dbReference type="Araport" id="AT4G02030"/>
    </source>
</evidence>
<evidence type="ECO:0000312" key="7">
    <source>
        <dbReference type="EMBL" id="CAB80696.1"/>
    </source>
</evidence>
<evidence type="ECO:0007744" key="8">
    <source>
    </source>
</evidence>